<comment type="function">
    <text evidence="1">Bifunctional enzyme which can phosphorylate or dephosphorylate isocitrate dehydrogenase (IDH) on a specific serine residue. This is a regulatory mechanism which enables bacteria to bypass the Krebs cycle via the glyoxylate shunt in response to the source of carbon. When bacteria are grown on glucose, IDH is fully active and unphosphorylated, but when grown on acetate or ethanol, the activity of IDH declines drastically concomitant with its phosphorylation.</text>
</comment>
<comment type="catalytic activity">
    <reaction evidence="1">
        <text>L-seryl-[isocitrate dehydrogenase] + ATP = O-phospho-L-seryl-[isocitrate dehydrogenase] + ADP + H(+)</text>
        <dbReference type="Rhea" id="RHEA:43540"/>
        <dbReference type="Rhea" id="RHEA-COMP:10605"/>
        <dbReference type="Rhea" id="RHEA-COMP:10606"/>
        <dbReference type="ChEBI" id="CHEBI:15378"/>
        <dbReference type="ChEBI" id="CHEBI:29999"/>
        <dbReference type="ChEBI" id="CHEBI:30616"/>
        <dbReference type="ChEBI" id="CHEBI:83421"/>
        <dbReference type="ChEBI" id="CHEBI:456216"/>
        <dbReference type="EC" id="2.7.11.5"/>
    </reaction>
</comment>
<comment type="subcellular location">
    <subcellularLocation>
        <location evidence="1">Cytoplasm</location>
    </subcellularLocation>
</comment>
<comment type="similarity">
    <text evidence="1">Belongs to the AceK family.</text>
</comment>
<gene>
    <name evidence="1" type="primary">aceK</name>
    <name type="ordered locus">Pfl01_1419</name>
</gene>
<accession>Q3KGE4</accession>
<evidence type="ECO:0000255" key="1">
    <source>
        <dbReference type="HAMAP-Rule" id="MF_00747"/>
    </source>
</evidence>
<proteinExistence type="inferred from homology"/>
<sequence>MPQQWPATDIARLILDGFDDYREHFRRITDGARERFEQARWQDTQTASAARINLYEEKVGETVARLREYFEPDTLMDVTCWPLVKSAYISIIDLRFDDELSETWYNSIFCSLFSHDLISDGCMFIHTTRPSLRRARAAQTRTYKPQGQISGMLASIFADYRFSEAYADLPGDLLRLEAQLRENLPDWVCKDPELSVELFSSVLYRNKGAYLVGRIYTNDDQWPLVIPLLHREGRGIQIDALITDEAEVSIIFSFTRSYFMVDVPVPAEFIGFLKRILPGKHIAELYTSIGFYKHGKSEFYRALINHLANTDDQFIMAPGVRGMVMSVFTLPGFNTVFKIIKDRFSPSKNVDRATVIEKYRLVKSVDRVGRMADTQEFADFRFPLSKFEPACLAELLEVAPSTVSLEGETVLIRHCWTERRMTPLNLYLDNANEAQVREALEDYGLAIKQLAAANIFPGDMLLKNFGVTRHGRVVFYDYDEICFLTEANFRHIPAPRTPEDEMASEPWYSIGPLDVFPEEFPPFLFADAAQRKLFDQLHGELYNADYWKGLQEAIRAGKVIDVFPYRRKGLDNE</sequence>
<dbReference type="EC" id="2.7.11.5" evidence="1"/>
<dbReference type="EC" id="3.1.3.-" evidence="1"/>
<dbReference type="EMBL" id="CP000094">
    <property type="protein sequence ID" value="ABA73162.1"/>
    <property type="molecule type" value="Genomic_DNA"/>
</dbReference>
<dbReference type="RefSeq" id="WP_011332949.1">
    <property type="nucleotide sequence ID" value="NC_007492.2"/>
</dbReference>
<dbReference type="SMR" id="Q3KGE4"/>
<dbReference type="KEGG" id="pfo:Pfl01_1419"/>
<dbReference type="eggNOG" id="COG4579">
    <property type="taxonomic scope" value="Bacteria"/>
</dbReference>
<dbReference type="HOGENOM" id="CLU_033804_1_1_6"/>
<dbReference type="Proteomes" id="UP000002704">
    <property type="component" value="Chromosome"/>
</dbReference>
<dbReference type="GO" id="GO:0005737">
    <property type="term" value="C:cytoplasm"/>
    <property type="evidence" value="ECO:0007669"/>
    <property type="project" value="UniProtKB-SubCell"/>
</dbReference>
<dbReference type="GO" id="GO:0008772">
    <property type="term" value="F:[isocitrate dehydrogenase (NADP+)] kinase activity"/>
    <property type="evidence" value="ECO:0007669"/>
    <property type="project" value="UniProtKB-UniRule"/>
</dbReference>
<dbReference type="GO" id="GO:0016208">
    <property type="term" value="F:AMP binding"/>
    <property type="evidence" value="ECO:0007669"/>
    <property type="project" value="TreeGrafter"/>
</dbReference>
<dbReference type="GO" id="GO:0005524">
    <property type="term" value="F:ATP binding"/>
    <property type="evidence" value="ECO:0007669"/>
    <property type="project" value="UniProtKB-UniRule"/>
</dbReference>
<dbReference type="GO" id="GO:0004721">
    <property type="term" value="F:phosphoprotein phosphatase activity"/>
    <property type="evidence" value="ECO:0007669"/>
    <property type="project" value="UniProtKB-KW"/>
</dbReference>
<dbReference type="GO" id="GO:0004674">
    <property type="term" value="F:protein serine/threonine kinase activity"/>
    <property type="evidence" value="ECO:0007669"/>
    <property type="project" value="UniProtKB-KW"/>
</dbReference>
<dbReference type="GO" id="GO:0006006">
    <property type="term" value="P:glucose metabolic process"/>
    <property type="evidence" value="ECO:0007669"/>
    <property type="project" value="InterPro"/>
</dbReference>
<dbReference type="GO" id="GO:0006097">
    <property type="term" value="P:glyoxylate cycle"/>
    <property type="evidence" value="ECO:0007669"/>
    <property type="project" value="UniProtKB-UniRule"/>
</dbReference>
<dbReference type="GO" id="GO:0006099">
    <property type="term" value="P:tricarboxylic acid cycle"/>
    <property type="evidence" value="ECO:0007669"/>
    <property type="project" value="UniProtKB-UniRule"/>
</dbReference>
<dbReference type="HAMAP" id="MF_00747">
    <property type="entry name" value="AceK"/>
    <property type="match status" value="1"/>
</dbReference>
<dbReference type="InterPro" id="IPR046855">
    <property type="entry name" value="AceK_kinase"/>
</dbReference>
<dbReference type="InterPro" id="IPR046854">
    <property type="entry name" value="AceK_regulatory"/>
</dbReference>
<dbReference type="InterPro" id="IPR010452">
    <property type="entry name" value="Isocitrate_DH_AceK"/>
</dbReference>
<dbReference type="NCBIfam" id="NF002804">
    <property type="entry name" value="PRK02946.1"/>
    <property type="match status" value="1"/>
</dbReference>
<dbReference type="PANTHER" id="PTHR39559">
    <property type="match status" value="1"/>
</dbReference>
<dbReference type="PANTHER" id="PTHR39559:SF1">
    <property type="entry name" value="ISOCITRATE DEHYDROGENASE KINASE_PHOSPHATASE"/>
    <property type="match status" value="1"/>
</dbReference>
<dbReference type="Pfam" id="PF06315">
    <property type="entry name" value="AceK_kinase"/>
    <property type="match status" value="1"/>
</dbReference>
<dbReference type="Pfam" id="PF20423">
    <property type="entry name" value="AceK_regulatory"/>
    <property type="match status" value="1"/>
</dbReference>
<dbReference type="PIRSF" id="PIRSF000719">
    <property type="entry name" value="AceK"/>
    <property type="match status" value="1"/>
</dbReference>
<keyword id="KW-0067">ATP-binding</keyword>
<keyword id="KW-0963">Cytoplasm</keyword>
<keyword id="KW-0329">Glyoxylate bypass</keyword>
<keyword id="KW-0378">Hydrolase</keyword>
<keyword id="KW-0418">Kinase</keyword>
<keyword id="KW-0547">Nucleotide-binding</keyword>
<keyword id="KW-0904">Protein phosphatase</keyword>
<keyword id="KW-0723">Serine/threonine-protein kinase</keyword>
<keyword id="KW-0808">Transferase</keyword>
<keyword id="KW-0816">Tricarboxylic acid cycle</keyword>
<feature type="chain" id="PRO_0000259154" description="Isocitrate dehydrogenase kinase/phosphatase">
    <location>
        <begin position="1"/>
        <end position="573"/>
    </location>
</feature>
<feature type="active site" evidence="1">
    <location>
        <position position="373"/>
    </location>
</feature>
<feature type="binding site" evidence="1">
    <location>
        <begin position="317"/>
        <end position="323"/>
    </location>
    <ligand>
        <name>ATP</name>
        <dbReference type="ChEBI" id="CHEBI:30616"/>
    </ligand>
</feature>
<feature type="binding site" evidence="1">
    <location>
        <position position="338"/>
    </location>
    <ligand>
        <name>ATP</name>
        <dbReference type="ChEBI" id="CHEBI:30616"/>
    </ligand>
</feature>
<organism>
    <name type="scientific">Pseudomonas fluorescens (strain Pf0-1)</name>
    <dbReference type="NCBI Taxonomy" id="205922"/>
    <lineage>
        <taxon>Bacteria</taxon>
        <taxon>Pseudomonadati</taxon>
        <taxon>Pseudomonadota</taxon>
        <taxon>Gammaproteobacteria</taxon>
        <taxon>Pseudomonadales</taxon>
        <taxon>Pseudomonadaceae</taxon>
        <taxon>Pseudomonas</taxon>
    </lineage>
</organism>
<name>ACEK_PSEPF</name>
<protein>
    <recommendedName>
        <fullName evidence="1">Isocitrate dehydrogenase kinase/phosphatase</fullName>
        <shortName evidence="1">IDH kinase/phosphatase</shortName>
        <shortName evidence="1">IDHK/P</shortName>
        <ecNumber evidence="1">2.7.11.5</ecNumber>
        <ecNumber evidence="1">3.1.3.-</ecNumber>
    </recommendedName>
</protein>
<reference key="1">
    <citation type="journal article" date="2009" name="Genome Biol.">
        <title>Genomic and genetic analyses of diversity and plant interactions of Pseudomonas fluorescens.</title>
        <authorList>
            <person name="Silby M.W."/>
            <person name="Cerdeno-Tarraga A.M."/>
            <person name="Vernikos G.S."/>
            <person name="Giddens S.R."/>
            <person name="Jackson R.W."/>
            <person name="Preston G.M."/>
            <person name="Zhang X.-X."/>
            <person name="Moon C.D."/>
            <person name="Gehrig S.M."/>
            <person name="Godfrey S.A.C."/>
            <person name="Knight C.G."/>
            <person name="Malone J.G."/>
            <person name="Robinson Z."/>
            <person name="Spiers A.J."/>
            <person name="Harris S."/>
            <person name="Challis G.L."/>
            <person name="Yaxley A.M."/>
            <person name="Harris D."/>
            <person name="Seeger K."/>
            <person name="Murphy L."/>
            <person name="Rutter S."/>
            <person name="Squares R."/>
            <person name="Quail M.A."/>
            <person name="Saunders E."/>
            <person name="Mavromatis K."/>
            <person name="Brettin T.S."/>
            <person name="Bentley S.D."/>
            <person name="Hothersall J."/>
            <person name="Stephens E."/>
            <person name="Thomas C.M."/>
            <person name="Parkhill J."/>
            <person name="Levy S.B."/>
            <person name="Rainey P.B."/>
            <person name="Thomson N.R."/>
        </authorList>
    </citation>
    <scope>NUCLEOTIDE SEQUENCE [LARGE SCALE GENOMIC DNA]</scope>
    <source>
        <strain>Pf0-1</strain>
    </source>
</reference>